<dbReference type="EMBL" id="HE600976">
    <property type="protein sequence ID" value="CAP35263.1"/>
    <property type="molecule type" value="Genomic_DNA"/>
</dbReference>
<dbReference type="SMR" id="Q60ZR7"/>
<dbReference type="FunCoup" id="Q60ZR7">
    <property type="interactions" value="80"/>
</dbReference>
<dbReference type="STRING" id="6238.Q60ZR7"/>
<dbReference type="EnsemblMetazoa" id="CBG17683.1">
    <property type="protein sequence ID" value="CBG17683.1"/>
    <property type="gene ID" value="WBGene00037247"/>
</dbReference>
<dbReference type="KEGG" id="cbr:CBG_17683"/>
<dbReference type="CTD" id="8576334"/>
<dbReference type="WormBase" id="CBG17683">
    <property type="protein sequence ID" value="CBP10623"/>
    <property type="gene ID" value="WBGene00037247"/>
    <property type="gene designation" value="Cbr-ric-3"/>
</dbReference>
<dbReference type="eggNOG" id="KOG4808">
    <property type="taxonomic scope" value="Eukaryota"/>
</dbReference>
<dbReference type="HOGENOM" id="CLU_732029_0_0_1"/>
<dbReference type="InParanoid" id="Q60ZR7"/>
<dbReference type="OMA" id="IMYRIFL"/>
<dbReference type="Proteomes" id="UP000008549">
    <property type="component" value="Unassembled WGS sequence"/>
</dbReference>
<dbReference type="GO" id="GO:0005789">
    <property type="term" value="C:endoplasmic reticulum membrane"/>
    <property type="evidence" value="ECO:0007669"/>
    <property type="project" value="UniProtKB-SubCell"/>
</dbReference>
<dbReference type="GO" id="GO:0043231">
    <property type="term" value="C:intracellular membrane-bounded organelle"/>
    <property type="evidence" value="ECO:0000318"/>
    <property type="project" value="GO_Central"/>
</dbReference>
<dbReference type="GO" id="GO:0043005">
    <property type="term" value="C:neuron projection"/>
    <property type="evidence" value="ECO:0000318"/>
    <property type="project" value="GO_Central"/>
</dbReference>
<dbReference type="GO" id="GO:0043025">
    <property type="term" value="C:neuronal cell body"/>
    <property type="evidence" value="ECO:0000318"/>
    <property type="project" value="GO_Central"/>
</dbReference>
<dbReference type="GO" id="GO:0045202">
    <property type="term" value="C:synapse"/>
    <property type="evidence" value="ECO:0007669"/>
    <property type="project" value="GOC"/>
</dbReference>
<dbReference type="GO" id="GO:0044183">
    <property type="term" value="F:protein folding chaperone"/>
    <property type="evidence" value="ECO:0007669"/>
    <property type="project" value="EnsemblMetazoa"/>
</dbReference>
<dbReference type="GO" id="GO:0032224">
    <property type="term" value="P:positive regulation of synaptic transmission, cholinergic"/>
    <property type="evidence" value="ECO:0007669"/>
    <property type="project" value="EnsemblMetazoa"/>
</dbReference>
<dbReference type="GO" id="GO:0034394">
    <property type="term" value="P:protein localization to cell surface"/>
    <property type="evidence" value="ECO:0000318"/>
    <property type="project" value="GO_Central"/>
</dbReference>
<dbReference type="GO" id="GO:0006937">
    <property type="term" value="P:regulation of muscle contraction"/>
    <property type="evidence" value="ECO:0007669"/>
    <property type="project" value="EnsemblMetazoa"/>
</dbReference>
<dbReference type="GO" id="GO:0007271">
    <property type="term" value="P:synaptic transmission, cholinergic"/>
    <property type="evidence" value="ECO:0000318"/>
    <property type="project" value="GO_Central"/>
</dbReference>
<dbReference type="InterPro" id="IPR026160">
    <property type="entry name" value="Ric3"/>
</dbReference>
<dbReference type="InterPro" id="IPR032763">
    <property type="entry name" value="RIC3_N"/>
</dbReference>
<dbReference type="PANTHER" id="PTHR21723:SF3">
    <property type="entry name" value="PROTEIN RIC-3"/>
    <property type="match status" value="1"/>
</dbReference>
<dbReference type="PANTHER" id="PTHR21723">
    <property type="entry name" value="RESISTANCE TO INHIBITORS OF CHOLINESTERASE PROTEIN 3 RIC3"/>
    <property type="match status" value="1"/>
</dbReference>
<dbReference type="Pfam" id="PF15361">
    <property type="entry name" value="RIC3"/>
    <property type="match status" value="1"/>
</dbReference>
<accession>Q60ZR7</accession>
<accession>A8XRI9</accession>
<proteinExistence type="inferred from homology"/>
<evidence type="ECO:0000250" key="1"/>
<evidence type="ECO:0000255" key="2"/>
<evidence type="ECO:0000256" key="3">
    <source>
        <dbReference type="SAM" id="MobiDB-lite"/>
    </source>
</evidence>
<evidence type="ECO:0000305" key="4"/>
<protein>
    <recommendedName>
        <fullName>Resistance to inhibitors of cholinesterase protein 3</fullName>
    </recommendedName>
</protein>
<keyword id="KW-0256">Endoplasmic reticulum</keyword>
<keyword id="KW-0472">Membrane</keyword>
<keyword id="KW-1185">Reference proteome</keyword>
<keyword id="KW-0812">Transmembrane</keyword>
<keyword id="KW-1133">Transmembrane helix</keyword>
<reference key="1">
    <citation type="journal article" date="2003" name="PLoS Biol.">
        <title>The genome sequence of Caenorhabditis briggsae: a platform for comparative genomics.</title>
        <authorList>
            <person name="Stein L.D."/>
            <person name="Bao Z."/>
            <person name="Blasiar D."/>
            <person name="Blumenthal T."/>
            <person name="Brent M.R."/>
            <person name="Chen N."/>
            <person name="Chinwalla A."/>
            <person name="Clarke L."/>
            <person name="Clee C."/>
            <person name="Coghlan A."/>
            <person name="Coulson A."/>
            <person name="D'Eustachio P."/>
            <person name="Fitch D.H.A."/>
            <person name="Fulton L.A."/>
            <person name="Fulton R.E."/>
            <person name="Griffiths-Jones S."/>
            <person name="Harris T.W."/>
            <person name="Hillier L.W."/>
            <person name="Kamath R."/>
            <person name="Kuwabara P.E."/>
            <person name="Mardis E.R."/>
            <person name="Marra M.A."/>
            <person name="Miner T.L."/>
            <person name="Minx P."/>
            <person name="Mullikin J.C."/>
            <person name="Plumb R.W."/>
            <person name="Rogers J."/>
            <person name="Schein J.E."/>
            <person name="Sohrmann M."/>
            <person name="Spieth J."/>
            <person name="Stajich J.E."/>
            <person name="Wei C."/>
            <person name="Willey D."/>
            <person name="Wilson R.K."/>
            <person name="Durbin R.M."/>
            <person name="Waterston R.H."/>
        </authorList>
    </citation>
    <scope>NUCLEOTIDE SEQUENCE [LARGE SCALE GENOMIC DNA]</scope>
    <source>
        <strain>AF16</strain>
    </source>
</reference>
<name>RIC3_CAEBR</name>
<feature type="chain" id="PRO_0000302734" description="Resistance to inhibitors of cholinesterase protein 3">
    <location>
        <begin position="1"/>
        <end position="385"/>
    </location>
</feature>
<feature type="transmembrane region" description="Helical" evidence="2">
    <location>
        <begin position="39"/>
        <end position="59"/>
    </location>
</feature>
<feature type="transmembrane region" description="Helical" evidence="2">
    <location>
        <begin position="127"/>
        <end position="147"/>
    </location>
</feature>
<feature type="region of interest" description="Disordered" evidence="3">
    <location>
        <begin position="1"/>
        <end position="31"/>
    </location>
</feature>
<feature type="region of interest" description="Sufficient for function in acetylcholine receptor folding" evidence="1">
    <location>
        <begin position="32"/>
        <end position="152"/>
    </location>
</feature>
<feature type="region of interest" description="Disordered" evidence="3">
    <location>
        <begin position="72"/>
        <end position="105"/>
    </location>
</feature>
<feature type="region of interest" description="Disordered" evidence="3">
    <location>
        <begin position="157"/>
        <end position="176"/>
    </location>
</feature>
<feature type="region of interest" description="Disordered" evidence="3">
    <location>
        <begin position="269"/>
        <end position="385"/>
    </location>
</feature>
<feature type="compositionally biased region" description="Basic and acidic residues" evidence="3">
    <location>
        <begin position="1"/>
        <end position="13"/>
    </location>
</feature>
<feature type="compositionally biased region" description="Acidic residues" evidence="3">
    <location>
        <begin position="163"/>
        <end position="172"/>
    </location>
</feature>
<feature type="compositionally biased region" description="Acidic residues" evidence="3">
    <location>
        <begin position="281"/>
        <end position="310"/>
    </location>
</feature>
<feature type="compositionally biased region" description="Acidic residues" evidence="3">
    <location>
        <begin position="352"/>
        <end position="361"/>
    </location>
</feature>
<feature type="compositionally biased region" description="Basic and acidic residues" evidence="3">
    <location>
        <begin position="362"/>
        <end position="374"/>
    </location>
</feature>
<feature type="compositionally biased region" description="Basic residues" evidence="3">
    <location>
        <begin position="375"/>
        <end position="385"/>
    </location>
</feature>
<sequence>MPKLTDRNRDRDREKKKRRRRDDSYDDYEEEGGISGWKLGLVVGVIVVCFAMLYPTLFHPMLMGFLGRSSQPAPSINQQRPPIHPAMGGGGGQRHPGGYPSRPDVHPAMRMAQAQAEGQSGGSKGMFTWMLPIYTIGVVLFLLYTLFKSKGKKAKRKKRNYFDSEDDSEDSEMETKYGGKFGKKKLKGLQERLRQTEDAMSKILEQLESVQAGANPVDLDAADKLALELEEDKSAKEAVGLTETNEQYIKDLEVALKEFQSLSKAYDKEKMKKLKRKDSSSEEEEEEEEEEEEEEEELSELSEVEEEEEEKPVKKGKKVVDQKKPAKKAILRQKSTSEEEEETRIADKKAEEEEEEGIDIDFEIREHAERNKKDKNLRRRRPKKT</sequence>
<comment type="function">
    <text evidence="1">Required for maturation and cell surface expression of acetylcholine receptors.</text>
</comment>
<comment type="subunit">
    <text evidence="1">Interacts with the deg-3/des-2 acetylcholine receptor.</text>
</comment>
<comment type="subcellular location">
    <subcellularLocation>
        <location evidence="1">Endoplasmic reticulum membrane</location>
        <topology evidence="1">Multi-pass membrane protein</topology>
    </subcellularLocation>
</comment>
<comment type="similarity">
    <text evidence="4">Belongs to the ric-3 family.</text>
</comment>
<organism>
    <name type="scientific">Caenorhabditis briggsae</name>
    <dbReference type="NCBI Taxonomy" id="6238"/>
    <lineage>
        <taxon>Eukaryota</taxon>
        <taxon>Metazoa</taxon>
        <taxon>Ecdysozoa</taxon>
        <taxon>Nematoda</taxon>
        <taxon>Chromadorea</taxon>
        <taxon>Rhabditida</taxon>
        <taxon>Rhabditina</taxon>
        <taxon>Rhabditomorpha</taxon>
        <taxon>Rhabditoidea</taxon>
        <taxon>Rhabditidae</taxon>
        <taxon>Peloderinae</taxon>
        <taxon>Caenorhabditis</taxon>
    </lineage>
</organism>
<gene>
    <name type="primary">ric-3</name>
    <name type="ORF">CBG17683</name>
</gene>